<sequence>MKIYLVGGAVRDALLGLPVKDRDWVVVGSTPQEMLDAGYQQVGRDFPVFLHPQTHEEYALARTERKSGSGYTGFTCYAAPDVTLEDDLKRRDLTINALAQDDNGEIIDPYNGLGDLQNRLLRHVSPAFGEDPLRVLRVARFAARYAHLGFRIADETLTLMREMTHEGELEHLTPERVWKETESALTTRNPQVFFQVLRDCGALRVLFPEIDALFGVPAPARWHPEIDTGIHTLMTLSMAAMLSPQVDVRFATLCHDLGKGLTPPELWPRHHGHGPAGVKLVEQLCQRLRVPNEIRDLARLVAEFHDLIHTFPMLNPKTIVKLFDSIDAWRKPQRVEQLALTSEADVRGRTGFESADYPQGRWLREAWEVAQSVPTKAVVEAGFKGVEIREELTRRRIAAVASWKEQRCPKPD</sequence>
<reference key="1">
    <citation type="journal article" date="2008" name="DNA Res.">
        <title>Complete genome sequence and comparative analysis of the wild-type commensal Escherichia coli strain SE11 isolated from a healthy adult.</title>
        <authorList>
            <person name="Oshima K."/>
            <person name="Toh H."/>
            <person name="Ogura Y."/>
            <person name="Sasamoto H."/>
            <person name="Morita H."/>
            <person name="Park S.-H."/>
            <person name="Ooka T."/>
            <person name="Iyoda S."/>
            <person name="Taylor T.D."/>
            <person name="Hayashi T."/>
            <person name="Itoh K."/>
            <person name="Hattori M."/>
        </authorList>
    </citation>
    <scope>NUCLEOTIDE SEQUENCE [LARGE SCALE GENOMIC DNA]</scope>
    <source>
        <strain>SE11</strain>
    </source>
</reference>
<comment type="function">
    <text evidence="1">Catalyzes the addition and repair of the essential 3'-terminal CCA sequence in tRNAs without using a nucleic acid template. Adds these three nucleotides in the order of C, C, and A to the tRNA nucleotide-73, using CTP and ATP as substrates and producing inorganic pyrophosphate. tRNA 3'-terminal CCA addition is required both for tRNA processing and repair. Also involved in tRNA surveillance by mediating tandem CCA addition to generate a CCACCA at the 3' terminus of unstable tRNAs. While stable tRNAs receive only 3'-terminal CCA, unstable tRNAs are marked with CCACCA and rapidly degraded.</text>
</comment>
<comment type="catalytic activity">
    <reaction evidence="1">
        <text>a tRNA precursor + 2 CTP + ATP = a tRNA with a 3' CCA end + 3 diphosphate</text>
        <dbReference type="Rhea" id="RHEA:14433"/>
        <dbReference type="Rhea" id="RHEA-COMP:10465"/>
        <dbReference type="Rhea" id="RHEA-COMP:10468"/>
        <dbReference type="ChEBI" id="CHEBI:30616"/>
        <dbReference type="ChEBI" id="CHEBI:33019"/>
        <dbReference type="ChEBI" id="CHEBI:37563"/>
        <dbReference type="ChEBI" id="CHEBI:74896"/>
        <dbReference type="ChEBI" id="CHEBI:83071"/>
        <dbReference type="EC" id="2.7.7.72"/>
    </reaction>
</comment>
<comment type="catalytic activity">
    <reaction evidence="1">
        <text>a tRNA with a 3' CCA end + 2 CTP + ATP = a tRNA with a 3' CCACCA end + 3 diphosphate</text>
        <dbReference type="Rhea" id="RHEA:76235"/>
        <dbReference type="Rhea" id="RHEA-COMP:10468"/>
        <dbReference type="Rhea" id="RHEA-COMP:18655"/>
        <dbReference type="ChEBI" id="CHEBI:30616"/>
        <dbReference type="ChEBI" id="CHEBI:33019"/>
        <dbReference type="ChEBI" id="CHEBI:37563"/>
        <dbReference type="ChEBI" id="CHEBI:83071"/>
        <dbReference type="ChEBI" id="CHEBI:195187"/>
    </reaction>
    <physiologicalReaction direction="left-to-right" evidence="1">
        <dbReference type="Rhea" id="RHEA:76236"/>
    </physiologicalReaction>
</comment>
<comment type="cofactor">
    <cofactor evidence="1">
        <name>Mg(2+)</name>
        <dbReference type="ChEBI" id="CHEBI:18420"/>
    </cofactor>
    <text evidence="1">Magnesium is required for nucleotidyltransferase activity.</text>
</comment>
<comment type="cofactor">
    <cofactor evidence="1">
        <name>Ni(2+)</name>
        <dbReference type="ChEBI" id="CHEBI:49786"/>
    </cofactor>
    <text evidence="1">Nickel for phosphatase activity.</text>
</comment>
<comment type="subunit">
    <text evidence="1">Monomer. Can also form homodimers and oligomers.</text>
</comment>
<comment type="domain">
    <text evidence="1">Comprises two domains: an N-terminal domain containing the nucleotidyltransferase activity and a C-terminal HD domain associated with both phosphodiesterase and phosphatase activities.</text>
</comment>
<comment type="miscellaneous">
    <text evidence="1">A single active site specifically recognizes both ATP and CTP and is responsible for their addition.</text>
</comment>
<comment type="similarity">
    <text evidence="1">Belongs to the tRNA nucleotidyltransferase/poly(A) polymerase family. Bacterial CCA-adding enzyme type 1 subfamily.</text>
</comment>
<organism>
    <name type="scientific">Escherichia coli (strain SE11)</name>
    <dbReference type="NCBI Taxonomy" id="409438"/>
    <lineage>
        <taxon>Bacteria</taxon>
        <taxon>Pseudomonadati</taxon>
        <taxon>Pseudomonadota</taxon>
        <taxon>Gammaproteobacteria</taxon>
        <taxon>Enterobacterales</taxon>
        <taxon>Enterobacteriaceae</taxon>
        <taxon>Escherichia</taxon>
    </lineage>
</organism>
<evidence type="ECO:0000255" key="1">
    <source>
        <dbReference type="HAMAP-Rule" id="MF_01261"/>
    </source>
</evidence>
<protein>
    <recommendedName>
        <fullName evidence="1">Multifunctional CCA protein</fullName>
    </recommendedName>
    <domain>
        <recommendedName>
            <fullName evidence="1">CCA-adding enzyme</fullName>
            <ecNumber evidence="1">2.7.7.72</ecNumber>
        </recommendedName>
        <alternativeName>
            <fullName evidence="1">CCA tRNA nucleotidyltransferase</fullName>
        </alternativeName>
        <alternativeName>
            <fullName evidence="1">tRNA CCA-pyrophosphorylase</fullName>
        </alternativeName>
        <alternativeName>
            <fullName evidence="1">tRNA adenylyl-/cytidylyl-transferase</fullName>
        </alternativeName>
        <alternativeName>
            <fullName evidence="1">tRNA nucleotidyltransferase</fullName>
        </alternativeName>
        <alternativeName>
            <fullName evidence="1">tRNA-NT</fullName>
        </alternativeName>
    </domain>
    <domain>
        <recommendedName>
            <fullName evidence="1">2'-nucleotidase</fullName>
            <ecNumber evidence="1">3.1.3.-</ecNumber>
        </recommendedName>
    </domain>
    <domain>
        <recommendedName>
            <fullName evidence="1">2',3'-cyclic phosphodiesterase</fullName>
            <ecNumber evidence="1">3.1.4.-</ecNumber>
        </recommendedName>
    </domain>
    <domain>
        <recommendedName>
            <fullName evidence="1">Phosphatase</fullName>
            <ecNumber evidence="1">3.1.3.-</ecNumber>
        </recommendedName>
    </domain>
</protein>
<dbReference type="EC" id="2.7.7.72" evidence="1"/>
<dbReference type="EC" id="3.1.3.-" evidence="1"/>
<dbReference type="EC" id="3.1.4.-" evidence="1"/>
<dbReference type="EMBL" id="AP009240">
    <property type="protein sequence ID" value="BAG78860.1"/>
    <property type="molecule type" value="Genomic_DNA"/>
</dbReference>
<dbReference type="RefSeq" id="WP_000708504.1">
    <property type="nucleotide sequence ID" value="NC_011415.1"/>
</dbReference>
<dbReference type="SMR" id="B6I427"/>
<dbReference type="KEGG" id="ecy:ECSE_3336"/>
<dbReference type="HOGENOM" id="CLU_015961_1_1_6"/>
<dbReference type="Proteomes" id="UP000008199">
    <property type="component" value="Chromosome"/>
</dbReference>
<dbReference type="GO" id="GO:0005524">
    <property type="term" value="F:ATP binding"/>
    <property type="evidence" value="ECO:0007669"/>
    <property type="project" value="UniProtKB-UniRule"/>
</dbReference>
<dbReference type="GO" id="GO:0004810">
    <property type="term" value="F:CCA tRNA nucleotidyltransferase activity"/>
    <property type="evidence" value="ECO:0007669"/>
    <property type="project" value="UniProtKB-UniRule"/>
</dbReference>
<dbReference type="GO" id="GO:0004112">
    <property type="term" value="F:cyclic-nucleotide phosphodiesterase activity"/>
    <property type="evidence" value="ECO:0007669"/>
    <property type="project" value="UniProtKB-UniRule"/>
</dbReference>
<dbReference type="GO" id="GO:0000287">
    <property type="term" value="F:magnesium ion binding"/>
    <property type="evidence" value="ECO:0007669"/>
    <property type="project" value="UniProtKB-UniRule"/>
</dbReference>
<dbReference type="GO" id="GO:0016791">
    <property type="term" value="F:phosphatase activity"/>
    <property type="evidence" value="ECO:0007669"/>
    <property type="project" value="UniProtKB-UniRule"/>
</dbReference>
<dbReference type="GO" id="GO:0000049">
    <property type="term" value="F:tRNA binding"/>
    <property type="evidence" value="ECO:0007669"/>
    <property type="project" value="UniProtKB-UniRule"/>
</dbReference>
<dbReference type="GO" id="GO:0042245">
    <property type="term" value="P:RNA repair"/>
    <property type="evidence" value="ECO:0007669"/>
    <property type="project" value="UniProtKB-KW"/>
</dbReference>
<dbReference type="GO" id="GO:0001680">
    <property type="term" value="P:tRNA 3'-terminal CCA addition"/>
    <property type="evidence" value="ECO:0007669"/>
    <property type="project" value="UniProtKB-UniRule"/>
</dbReference>
<dbReference type="CDD" id="cd00077">
    <property type="entry name" value="HDc"/>
    <property type="match status" value="1"/>
</dbReference>
<dbReference type="CDD" id="cd05398">
    <property type="entry name" value="NT_ClassII-CCAase"/>
    <property type="match status" value="1"/>
</dbReference>
<dbReference type="FunFam" id="1.10.3090.10:FF:000001">
    <property type="entry name" value="Multifunctional CCA protein"/>
    <property type="match status" value="1"/>
</dbReference>
<dbReference type="FunFam" id="3.30.460.10:FF:000016">
    <property type="entry name" value="Multifunctional CCA protein"/>
    <property type="match status" value="1"/>
</dbReference>
<dbReference type="Gene3D" id="3.30.460.10">
    <property type="entry name" value="Beta Polymerase, domain 2"/>
    <property type="match status" value="1"/>
</dbReference>
<dbReference type="Gene3D" id="1.10.3090.10">
    <property type="entry name" value="cca-adding enzyme, domain 2"/>
    <property type="match status" value="1"/>
</dbReference>
<dbReference type="HAMAP" id="MF_01261">
    <property type="entry name" value="CCA_bact_type1"/>
    <property type="match status" value="1"/>
</dbReference>
<dbReference type="HAMAP" id="MF_01262">
    <property type="entry name" value="CCA_bact_type2"/>
    <property type="match status" value="1"/>
</dbReference>
<dbReference type="InterPro" id="IPR012006">
    <property type="entry name" value="CCA_bact"/>
</dbReference>
<dbReference type="InterPro" id="IPR003607">
    <property type="entry name" value="HD/PDEase_dom"/>
</dbReference>
<dbReference type="InterPro" id="IPR006674">
    <property type="entry name" value="HD_domain"/>
</dbReference>
<dbReference type="InterPro" id="IPR043519">
    <property type="entry name" value="NT_sf"/>
</dbReference>
<dbReference type="InterPro" id="IPR002646">
    <property type="entry name" value="PolA_pol_head_dom"/>
</dbReference>
<dbReference type="InterPro" id="IPR032828">
    <property type="entry name" value="PolyA_RNA-bd"/>
</dbReference>
<dbReference type="InterPro" id="IPR050124">
    <property type="entry name" value="tRNA_CCA-adding_enzyme"/>
</dbReference>
<dbReference type="NCBIfam" id="NF008137">
    <property type="entry name" value="PRK10885.1"/>
    <property type="match status" value="1"/>
</dbReference>
<dbReference type="PANTHER" id="PTHR47545">
    <property type="entry name" value="MULTIFUNCTIONAL CCA PROTEIN"/>
    <property type="match status" value="1"/>
</dbReference>
<dbReference type="PANTHER" id="PTHR47545:SF1">
    <property type="entry name" value="MULTIFUNCTIONAL CCA PROTEIN"/>
    <property type="match status" value="1"/>
</dbReference>
<dbReference type="Pfam" id="PF01966">
    <property type="entry name" value="HD"/>
    <property type="match status" value="1"/>
</dbReference>
<dbReference type="Pfam" id="PF01743">
    <property type="entry name" value="PolyA_pol"/>
    <property type="match status" value="1"/>
</dbReference>
<dbReference type="Pfam" id="PF12627">
    <property type="entry name" value="PolyA_pol_RNAbd"/>
    <property type="match status" value="1"/>
</dbReference>
<dbReference type="PIRSF" id="PIRSF000813">
    <property type="entry name" value="CCA_bact"/>
    <property type="match status" value="1"/>
</dbReference>
<dbReference type="SUPFAM" id="SSF81301">
    <property type="entry name" value="Nucleotidyltransferase"/>
    <property type="match status" value="1"/>
</dbReference>
<dbReference type="SUPFAM" id="SSF81891">
    <property type="entry name" value="Poly A polymerase C-terminal region-like"/>
    <property type="match status" value="1"/>
</dbReference>
<dbReference type="PROSITE" id="PS51831">
    <property type="entry name" value="HD"/>
    <property type="match status" value="1"/>
</dbReference>
<keyword id="KW-0067">ATP-binding</keyword>
<keyword id="KW-0378">Hydrolase</keyword>
<keyword id="KW-0460">Magnesium</keyword>
<keyword id="KW-0479">Metal-binding</keyword>
<keyword id="KW-0511">Multifunctional enzyme</keyword>
<keyword id="KW-0533">Nickel</keyword>
<keyword id="KW-0547">Nucleotide-binding</keyword>
<keyword id="KW-0548">Nucleotidyltransferase</keyword>
<keyword id="KW-0692">RNA repair</keyword>
<keyword id="KW-0694">RNA-binding</keyword>
<keyword id="KW-0808">Transferase</keyword>
<keyword id="KW-0819">tRNA processing</keyword>
<feature type="chain" id="PRO_1000140036" description="Multifunctional CCA protein">
    <location>
        <begin position="1"/>
        <end position="412"/>
    </location>
</feature>
<feature type="domain" description="HD" evidence="1">
    <location>
        <begin position="228"/>
        <end position="329"/>
    </location>
</feature>
<feature type="binding site" evidence="1">
    <location>
        <position position="8"/>
    </location>
    <ligand>
        <name>ATP</name>
        <dbReference type="ChEBI" id="CHEBI:30616"/>
    </ligand>
</feature>
<feature type="binding site" evidence="1">
    <location>
        <position position="8"/>
    </location>
    <ligand>
        <name>CTP</name>
        <dbReference type="ChEBI" id="CHEBI:37563"/>
    </ligand>
</feature>
<feature type="binding site" evidence="1">
    <location>
        <position position="11"/>
    </location>
    <ligand>
        <name>ATP</name>
        <dbReference type="ChEBI" id="CHEBI:30616"/>
    </ligand>
</feature>
<feature type="binding site" evidence="1">
    <location>
        <position position="11"/>
    </location>
    <ligand>
        <name>CTP</name>
        <dbReference type="ChEBI" id="CHEBI:37563"/>
    </ligand>
</feature>
<feature type="binding site" evidence="1">
    <location>
        <position position="21"/>
    </location>
    <ligand>
        <name>Mg(2+)</name>
        <dbReference type="ChEBI" id="CHEBI:18420"/>
    </ligand>
</feature>
<feature type="binding site" evidence="1">
    <location>
        <position position="23"/>
    </location>
    <ligand>
        <name>Mg(2+)</name>
        <dbReference type="ChEBI" id="CHEBI:18420"/>
    </ligand>
</feature>
<feature type="binding site" evidence="1">
    <location>
        <position position="91"/>
    </location>
    <ligand>
        <name>ATP</name>
        <dbReference type="ChEBI" id="CHEBI:30616"/>
    </ligand>
</feature>
<feature type="binding site" evidence="1">
    <location>
        <position position="91"/>
    </location>
    <ligand>
        <name>CTP</name>
        <dbReference type="ChEBI" id="CHEBI:37563"/>
    </ligand>
</feature>
<feature type="binding site" evidence="1">
    <location>
        <position position="137"/>
    </location>
    <ligand>
        <name>ATP</name>
        <dbReference type="ChEBI" id="CHEBI:30616"/>
    </ligand>
</feature>
<feature type="binding site" evidence="1">
    <location>
        <position position="137"/>
    </location>
    <ligand>
        <name>CTP</name>
        <dbReference type="ChEBI" id="CHEBI:37563"/>
    </ligand>
</feature>
<feature type="binding site" evidence="1">
    <location>
        <position position="140"/>
    </location>
    <ligand>
        <name>ATP</name>
        <dbReference type="ChEBI" id="CHEBI:30616"/>
    </ligand>
</feature>
<feature type="binding site" evidence="1">
    <location>
        <position position="140"/>
    </location>
    <ligand>
        <name>CTP</name>
        <dbReference type="ChEBI" id="CHEBI:37563"/>
    </ligand>
</feature>
<proteinExistence type="inferred from homology"/>
<accession>B6I427</accession>
<name>CCA_ECOSE</name>
<gene>
    <name evidence="1" type="primary">cca</name>
    <name type="ordered locus">ECSE_3336</name>
</gene>